<accession>Q80UY1</accession>
<accession>Q9CWF3</accession>
<keyword id="KW-0963">Cytoplasm</keyword>
<keyword id="KW-0489">Methyltransferase</keyword>
<keyword id="KW-0539">Nucleus</keyword>
<keyword id="KW-1185">Reference proteome</keyword>
<keyword id="KW-0949">S-adenosyl-L-methionine</keyword>
<keyword id="KW-0808">Transferase</keyword>
<organism>
    <name type="scientific">Mus musculus</name>
    <name type="common">Mouse</name>
    <dbReference type="NCBI Taxonomy" id="10090"/>
    <lineage>
        <taxon>Eukaryota</taxon>
        <taxon>Metazoa</taxon>
        <taxon>Chordata</taxon>
        <taxon>Craniata</taxon>
        <taxon>Vertebrata</taxon>
        <taxon>Euteleostomi</taxon>
        <taxon>Mammalia</taxon>
        <taxon>Eutheria</taxon>
        <taxon>Euarchontoglires</taxon>
        <taxon>Glires</taxon>
        <taxon>Rodentia</taxon>
        <taxon>Myomorpha</taxon>
        <taxon>Muroidea</taxon>
        <taxon>Muridae</taxon>
        <taxon>Murinae</taxon>
        <taxon>Mus</taxon>
        <taxon>Mus</taxon>
    </lineage>
</organism>
<proteinExistence type="evidence at protein level"/>
<evidence type="ECO:0000250" key="1">
    <source>
        <dbReference type="UniProtKB" id="Q5BJZ6"/>
    </source>
</evidence>
<evidence type="ECO:0000250" key="2">
    <source>
        <dbReference type="UniProtKB" id="Q8N4J0"/>
    </source>
</evidence>
<evidence type="ECO:0000256" key="3">
    <source>
        <dbReference type="SAM" id="MobiDB-lite"/>
    </source>
</evidence>
<evidence type="ECO:0000305" key="4"/>
<evidence type="ECO:0000312" key="5">
    <source>
        <dbReference type="MGI" id="MGI:1914633"/>
    </source>
</evidence>
<sequence length="400" mass="46339">MQRRQRAPPASQPAQDGGRSEDVEVQFSAGRLGSAAPAGPPARGTAEDEERLEREHFWKVINAFRYYGTSMHERVNRTERQFRSLPENQQKLLPQFPLHLDKIRKCIDHNQEILLTIVNDCIHMFENKEYGEDANGKIMPASTFDMDKLKSTLKQFVRDWSETGKAERDACYKPIIKEIIKNFPKERWDPSKVNILVPGAGLGRLAWEVAMLGYACQGNEWSFFMLFSSNFVLNRCSEINKYKLYPWIHQFSNNRRSADQIRPILFPDVDPHSLPPGSNFSMTAGDFQEIYSECNAWDCIATCFFIDTAHNVIDYIDTIWRILKPGGIWINLGPLLYHFENLANELSIELSYEDIKNVVLQYGFQLEVEKESVLSTYTVNDLSMMKYYYECVLFVVRKPQ</sequence>
<name>CARME_MOUSE</name>
<feature type="chain" id="PRO_0000089686" description="Carnosine N-methyltransferase">
    <location>
        <begin position="1"/>
        <end position="400"/>
    </location>
</feature>
<feature type="region of interest" description="Disordered" evidence="3">
    <location>
        <begin position="1"/>
        <end position="51"/>
    </location>
</feature>
<feature type="compositionally biased region" description="Low complexity" evidence="3">
    <location>
        <begin position="28"/>
        <end position="44"/>
    </location>
</feature>
<feature type="binding site" evidence="2">
    <location>
        <position position="155"/>
    </location>
    <ligand>
        <name>S-adenosyl-L-methionine</name>
        <dbReference type="ChEBI" id="CHEBI:59789"/>
    </ligand>
</feature>
<feature type="binding site" evidence="2">
    <location>
        <position position="158"/>
    </location>
    <ligand>
        <name>S-adenosyl-L-methionine</name>
        <dbReference type="ChEBI" id="CHEBI:59789"/>
    </ligand>
</feature>
<feature type="binding site" evidence="2">
    <location>
        <position position="199"/>
    </location>
    <ligand>
        <name>S-adenosyl-L-methionine</name>
        <dbReference type="ChEBI" id="CHEBI:59789"/>
    </ligand>
</feature>
<feature type="binding site" evidence="2">
    <location>
        <position position="220"/>
    </location>
    <ligand>
        <name>S-adenosyl-L-methionine</name>
        <dbReference type="ChEBI" id="CHEBI:59789"/>
    </ligand>
</feature>
<feature type="binding site" evidence="2">
    <location>
        <position position="286"/>
    </location>
    <ligand>
        <name>S-adenosyl-L-methionine</name>
        <dbReference type="ChEBI" id="CHEBI:59789"/>
    </ligand>
</feature>
<feature type="binding site" evidence="2">
    <location>
        <position position="287"/>
    </location>
    <ligand>
        <name>S-adenosyl-L-methionine</name>
        <dbReference type="ChEBI" id="CHEBI:59789"/>
    </ligand>
</feature>
<feature type="binding site" evidence="2">
    <location>
        <position position="303"/>
    </location>
    <ligand>
        <name>S-adenosyl-L-methionine</name>
        <dbReference type="ChEBI" id="CHEBI:59789"/>
    </ligand>
</feature>
<feature type="binding site" evidence="2">
    <location>
        <position position="307"/>
    </location>
    <ligand>
        <name>carnosine</name>
        <dbReference type="ChEBI" id="CHEBI:57485"/>
    </ligand>
</feature>
<feature type="binding site" evidence="2">
    <location>
        <position position="315"/>
    </location>
    <ligand>
        <name>S-adenosyl-L-methionine</name>
        <dbReference type="ChEBI" id="CHEBI:59789"/>
    </ligand>
</feature>
<feature type="binding site" evidence="2">
    <location>
        <position position="338"/>
    </location>
    <ligand>
        <name>carnosine</name>
        <dbReference type="ChEBI" id="CHEBI:57485"/>
    </ligand>
</feature>
<feature type="binding site" evidence="2">
    <location>
        <position position="389"/>
    </location>
    <ligand>
        <name>carnosine</name>
        <dbReference type="ChEBI" id="CHEBI:57485"/>
    </ligand>
</feature>
<feature type="sequence conflict" description="In Ref. 1; BAB27180." evidence="4" ref="1">
    <original>SE</original>
    <variation>TR</variation>
    <location>
        <begin position="20"/>
        <end position="21"/>
    </location>
</feature>
<feature type="sequence conflict" description="In Ref. 1; BAB27180." evidence="4" ref="1">
    <original>H</original>
    <variation>D</variation>
    <location>
        <position position="56"/>
    </location>
</feature>
<dbReference type="EC" id="2.1.1.22" evidence="1"/>
<dbReference type="EMBL" id="AK010784">
    <property type="protein sequence ID" value="BAB27180.1"/>
    <property type="molecule type" value="mRNA"/>
</dbReference>
<dbReference type="EMBL" id="BC043335">
    <property type="protein sequence ID" value="AAH43335.1"/>
    <property type="molecule type" value="mRNA"/>
</dbReference>
<dbReference type="EMBL" id="BC092281">
    <property type="protein sequence ID" value="AAH92281.1"/>
    <property type="molecule type" value="mRNA"/>
</dbReference>
<dbReference type="CCDS" id="CCDS29689.1"/>
<dbReference type="RefSeq" id="NP_080396.2">
    <property type="nucleotide sequence ID" value="NM_026120.4"/>
</dbReference>
<dbReference type="SMR" id="Q80UY1"/>
<dbReference type="BioGRID" id="212149">
    <property type="interactions" value="6"/>
</dbReference>
<dbReference type="FunCoup" id="Q80UY1">
    <property type="interactions" value="3127"/>
</dbReference>
<dbReference type="IntAct" id="Q80UY1">
    <property type="interactions" value="1"/>
</dbReference>
<dbReference type="MINT" id="Q80UY1"/>
<dbReference type="STRING" id="10090.ENSMUSP00000025632"/>
<dbReference type="iPTMnet" id="Q80UY1"/>
<dbReference type="PhosphoSitePlus" id="Q80UY1"/>
<dbReference type="SwissPalm" id="Q80UY1"/>
<dbReference type="jPOST" id="Q80UY1"/>
<dbReference type="PaxDb" id="10090-ENSMUSP00000025632"/>
<dbReference type="PeptideAtlas" id="Q80UY1"/>
<dbReference type="ProteomicsDB" id="283674"/>
<dbReference type="Pumba" id="Q80UY1"/>
<dbReference type="Antibodypedia" id="12742">
    <property type="antibodies" value="173 antibodies from 19 providers"/>
</dbReference>
<dbReference type="DNASU" id="67383"/>
<dbReference type="Ensembl" id="ENSMUST00000025632.11">
    <property type="protein sequence ID" value="ENSMUSP00000025632.10"/>
    <property type="gene ID" value="ENSMUSG00000024726.11"/>
</dbReference>
<dbReference type="GeneID" id="67383"/>
<dbReference type="KEGG" id="mmu:67383"/>
<dbReference type="UCSC" id="uc008gxv.1">
    <property type="organism name" value="mouse"/>
</dbReference>
<dbReference type="AGR" id="MGI:1914633"/>
<dbReference type="CTD" id="138199"/>
<dbReference type="MGI" id="MGI:1914633">
    <property type="gene designation" value="Carnmt1"/>
</dbReference>
<dbReference type="VEuPathDB" id="HostDB:ENSMUSG00000024726"/>
<dbReference type="eggNOG" id="KOG2798">
    <property type="taxonomic scope" value="Eukaryota"/>
</dbReference>
<dbReference type="GeneTree" id="ENSGT00390000005323"/>
<dbReference type="HOGENOM" id="CLU_030612_0_0_1"/>
<dbReference type="InParanoid" id="Q80UY1"/>
<dbReference type="OMA" id="GSMSMCA"/>
<dbReference type="OrthoDB" id="978at2759"/>
<dbReference type="PhylomeDB" id="Q80UY1"/>
<dbReference type="TreeFam" id="TF313564"/>
<dbReference type="Reactome" id="R-MMU-70921">
    <property type="pathway name" value="Histidine catabolism"/>
</dbReference>
<dbReference type="BioGRID-ORCS" id="67383">
    <property type="hits" value="8 hits in 46 CRISPR screens"/>
</dbReference>
<dbReference type="ChiTaRS" id="Carnmt1">
    <property type="organism name" value="mouse"/>
</dbReference>
<dbReference type="PRO" id="PR:Q80UY1"/>
<dbReference type="Proteomes" id="UP000000589">
    <property type="component" value="Chromosome 19"/>
</dbReference>
<dbReference type="RNAct" id="Q80UY1">
    <property type="molecule type" value="protein"/>
</dbReference>
<dbReference type="Bgee" id="ENSMUSG00000024726">
    <property type="expression patterns" value="Expressed in quadriceps femoris and 66 other cell types or tissues"/>
</dbReference>
<dbReference type="ExpressionAtlas" id="Q80UY1">
    <property type="expression patterns" value="baseline and differential"/>
</dbReference>
<dbReference type="GO" id="GO:0005829">
    <property type="term" value="C:cytosol"/>
    <property type="evidence" value="ECO:0007669"/>
    <property type="project" value="UniProtKB-SubCell"/>
</dbReference>
<dbReference type="GO" id="GO:0005634">
    <property type="term" value="C:nucleus"/>
    <property type="evidence" value="ECO:0007669"/>
    <property type="project" value="UniProtKB-SubCell"/>
</dbReference>
<dbReference type="GO" id="GO:0030735">
    <property type="term" value="F:carnosine N-methyltransferase activity"/>
    <property type="evidence" value="ECO:0000250"/>
    <property type="project" value="UniProtKB"/>
</dbReference>
<dbReference type="GO" id="GO:0042803">
    <property type="term" value="F:protein homodimerization activity"/>
    <property type="evidence" value="ECO:0000250"/>
    <property type="project" value="UniProtKB"/>
</dbReference>
<dbReference type="GO" id="GO:0008757">
    <property type="term" value="F:S-adenosylmethionine-dependent methyltransferase activity"/>
    <property type="evidence" value="ECO:0000250"/>
    <property type="project" value="UniProtKB"/>
</dbReference>
<dbReference type="GO" id="GO:0035498">
    <property type="term" value="P:carnosine metabolic process"/>
    <property type="evidence" value="ECO:0000250"/>
    <property type="project" value="UniProtKB"/>
</dbReference>
<dbReference type="GO" id="GO:0032259">
    <property type="term" value="P:methylation"/>
    <property type="evidence" value="ECO:0007669"/>
    <property type="project" value="UniProtKB-KW"/>
</dbReference>
<dbReference type="FunFam" id="3.40.50.150:FF:000094">
    <property type="entry name" value="Carnosine N-methyltransferase 1"/>
    <property type="match status" value="1"/>
</dbReference>
<dbReference type="Gene3D" id="3.40.50.150">
    <property type="entry name" value="Vaccinia Virus protein VP39"/>
    <property type="match status" value="1"/>
</dbReference>
<dbReference type="InterPro" id="IPR012901">
    <property type="entry name" value="CARME"/>
</dbReference>
<dbReference type="InterPro" id="IPR029063">
    <property type="entry name" value="SAM-dependent_MTases_sf"/>
</dbReference>
<dbReference type="PANTHER" id="PTHR12303">
    <property type="entry name" value="CARNOSINE N-METHYLTRANSFERASE"/>
    <property type="match status" value="1"/>
</dbReference>
<dbReference type="PANTHER" id="PTHR12303:SF6">
    <property type="entry name" value="CARNOSINE N-METHYLTRANSFERASE"/>
    <property type="match status" value="1"/>
</dbReference>
<dbReference type="Pfam" id="PF07942">
    <property type="entry name" value="CARME"/>
    <property type="match status" value="1"/>
</dbReference>
<dbReference type="SMART" id="SM01296">
    <property type="entry name" value="N2227"/>
    <property type="match status" value="1"/>
</dbReference>
<dbReference type="SUPFAM" id="SSF53335">
    <property type="entry name" value="S-adenosyl-L-methionine-dependent methyltransferases"/>
    <property type="match status" value="1"/>
</dbReference>
<protein>
    <recommendedName>
        <fullName evidence="1 5">Carnosine N-methyltransferase</fullName>
        <ecNumber evidence="1">2.1.1.22</ecNumber>
    </recommendedName>
</protein>
<comment type="function">
    <text evidence="1">N-methyltransferase that catalyzes the formation of anserine (beta-alanyl-N(Pi)-methyl-L-histidine) from carnosine. Anserine, a methylated derivative of carnosine (beta-alanyl-L-histidine), is an abundant constituent of vertebrate skeletal muscles. Also methylates other L-histidine-containing di- and tripeptides such as Gly-Gly-His, Gly-His and homocarnosine (GABA-His).</text>
</comment>
<comment type="catalytic activity">
    <reaction evidence="1">
        <text>carnosine + S-adenosyl-L-methionine = anserine + S-adenosyl-L-homocysteine + H(+)</text>
        <dbReference type="Rhea" id="RHEA:14205"/>
        <dbReference type="ChEBI" id="CHEBI:15378"/>
        <dbReference type="ChEBI" id="CHEBI:57485"/>
        <dbReference type="ChEBI" id="CHEBI:57856"/>
        <dbReference type="ChEBI" id="CHEBI:58445"/>
        <dbReference type="ChEBI" id="CHEBI:59789"/>
        <dbReference type="EC" id="2.1.1.22"/>
    </reaction>
</comment>
<comment type="subunit">
    <text evidence="2">Homodimer. Each monomer accommodates one molecule of carnosine in its active pocket, precisely anchoring the histidine imidazole ring such that only N1 is exposed and deprotonated for methylation.</text>
</comment>
<comment type="subcellular location">
    <subcellularLocation>
        <location evidence="1">Cytoplasm</location>
        <location evidence="1">Cytosol</location>
    </subcellularLocation>
    <subcellularLocation>
        <location evidence="1">Nucleus</location>
    </subcellularLocation>
</comment>
<comment type="domain">
    <text evidence="2">The Gly-Xaa-Gly-Xaa-Gly (GXGXG) motif binds the adenosyl part of S-adenosyl-L-methionine.</text>
</comment>
<comment type="domain">
    <text evidence="2">The carnosine-binding region forms hydrophobic and hydrogen bonds with carnosine, defining a flipping orientation of the imidazole ring so that N1 is present next to S-adenosyl-L-methionine for methylation.</text>
</comment>
<comment type="similarity">
    <text evidence="4">Belongs to the carnosine N-methyltransferase family.</text>
</comment>
<gene>
    <name evidence="5" type="primary">Carnmt1</name>
</gene>
<reference key="1">
    <citation type="journal article" date="2005" name="Science">
        <title>The transcriptional landscape of the mammalian genome.</title>
        <authorList>
            <person name="Carninci P."/>
            <person name="Kasukawa T."/>
            <person name="Katayama S."/>
            <person name="Gough J."/>
            <person name="Frith M.C."/>
            <person name="Maeda N."/>
            <person name="Oyama R."/>
            <person name="Ravasi T."/>
            <person name="Lenhard B."/>
            <person name="Wells C."/>
            <person name="Kodzius R."/>
            <person name="Shimokawa K."/>
            <person name="Bajic V.B."/>
            <person name="Brenner S.E."/>
            <person name="Batalov S."/>
            <person name="Forrest A.R."/>
            <person name="Zavolan M."/>
            <person name="Davis M.J."/>
            <person name="Wilming L.G."/>
            <person name="Aidinis V."/>
            <person name="Allen J.E."/>
            <person name="Ambesi-Impiombato A."/>
            <person name="Apweiler R."/>
            <person name="Aturaliya R.N."/>
            <person name="Bailey T.L."/>
            <person name="Bansal M."/>
            <person name="Baxter L."/>
            <person name="Beisel K.W."/>
            <person name="Bersano T."/>
            <person name="Bono H."/>
            <person name="Chalk A.M."/>
            <person name="Chiu K.P."/>
            <person name="Choudhary V."/>
            <person name="Christoffels A."/>
            <person name="Clutterbuck D.R."/>
            <person name="Crowe M.L."/>
            <person name="Dalla E."/>
            <person name="Dalrymple B.P."/>
            <person name="de Bono B."/>
            <person name="Della Gatta G."/>
            <person name="di Bernardo D."/>
            <person name="Down T."/>
            <person name="Engstrom P."/>
            <person name="Fagiolini M."/>
            <person name="Faulkner G."/>
            <person name="Fletcher C.F."/>
            <person name="Fukushima T."/>
            <person name="Furuno M."/>
            <person name="Futaki S."/>
            <person name="Gariboldi M."/>
            <person name="Georgii-Hemming P."/>
            <person name="Gingeras T.R."/>
            <person name="Gojobori T."/>
            <person name="Green R.E."/>
            <person name="Gustincich S."/>
            <person name="Harbers M."/>
            <person name="Hayashi Y."/>
            <person name="Hensch T.K."/>
            <person name="Hirokawa N."/>
            <person name="Hill D."/>
            <person name="Huminiecki L."/>
            <person name="Iacono M."/>
            <person name="Ikeo K."/>
            <person name="Iwama A."/>
            <person name="Ishikawa T."/>
            <person name="Jakt M."/>
            <person name="Kanapin A."/>
            <person name="Katoh M."/>
            <person name="Kawasawa Y."/>
            <person name="Kelso J."/>
            <person name="Kitamura H."/>
            <person name="Kitano H."/>
            <person name="Kollias G."/>
            <person name="Krishnan S.P."/>
            <person name="Kruger A."/>
            <person name="Kummerfeld S.K."/>
            <person name="Kurochkin I.V."/>
            <person name="Lareau L.F."/>
            <person name="Lazarevic D."/>
            <person name="Lipovich L."/>
            <person name="Liu J."/>
            <person name="Liuni S."/>
            <person name="McWilliam S."/>
            <person name="Madan Babu M."/>
            <person name="Madera M."/>
            <person name="Marchionni L."/>
            <person name="Matsuda H."/>
            <person name="Matsuzawa S."/>
            <person name="Miki H."/>
            <person name="Mignone F."/>
            <person name="Miyake S."/>
            <person name="Morris K."/>
            <person name="Mottagui-Tabar S."/>
            <person name="Mulder N."/>
            <person name="Nakano N."/>
            <person name="Nakauchi H."/>
            <person name="Ng P."/>
            <person name="Nilsson R."/>
            <person name="Nishiguchi S."/>
            <person name="Nishikawa S."/>
            <person name="Nori F."/>
            <person name="Ohara O."/>
            <person name="Okazaki Y."/>
            <person name="Orlando V."/>
            <person name="Pang K.C."/>
            <person name="Pavan W.J."/>
            <person name="Pavesi G."/>
            <person name="Pesole G."/>
            <person name="Petrovsky N."/>
            <person name="Piazza S."/>
            <person name="Reed J."/>
            <person name="Reid J.F."/>
            <person name="Ring B.Z."/>
            <person name="Ringwald M."/>
            <person name="Rost B."/>
            <person name="Ruan Y."/>
            <person name="Salzberg S.L."/>
            <person name="Sandelin A."/>
            <person name="Schneider C."/>
            <person name="Schoenbach C."/>
            <person name="Sekiguchi K."/>
            <person name="Semple C.A."/>
            <person name="Seno S."/>
            <person name="Sessa L."/>
            <person name="Sheng Y."/>
            <person name="Shibata Y."/>
            <person name="Shimada H."/>
            <person name="Shimada K."/>
            <person name="Silva D."/>
            <person name="Sinclair B."/>
            <person name="Sperling S."/>
            <person name="Stupka E."/>
            <person name="Sugiura K."/>
            <person name="Sultana R."/>
            <person name="Takenaka Y."/>
            <person name="Taki K."/>
            <person name="Tammoja K."/>
            <person name="Tan S.L."/>
            <person name="Tang S."/>
            <person name="Taylor M.S."/>
            <person name="Tegner J."/>
            <person name="Teichmann S.A."/>
            <person name="Ueda H.R."/>
            <person name="van Nimwegen E."/>
            <person name="Verardo R."/>
            <person name="Wei C.L."/>
            <person name="Yagi K."/>
            <person name="Yamanishi H."/>
            <person name="Zabarovsky E."/>
            <person name="Zhu S."/>
            <person name="Zimmer A."/>
            <person name="Hide W."/>
            <person name="Bult C."/>
            <person name="Grimmond S.M."/>
            <person name="Teasdale R.D."/>
            <person name="Liu E.T."/>
            <person name="Brusic V."/>
            <person name="Quackenbush J."/>
            <person name="Wahlestedt C."/>
            <person name="Mattick J.S."/>
            <person name="Hume D.A."/>
            <person name="Kai C."/>
            <person name="Sasaki D."/>
            <person name="Tomaru Y."/>
            <person name="Fukuda S."/>
            <person name="Kanamori-Katayama M."/>
            <person name="Suzuki M."/>
            <person name="Aoki J."/>
            <person name="Arakawa T."/>
            <person name="Iida J."/>
            <person name="Imamura K."/>
            <person name="Itoh M."/>
            <person name="Kato T."/>
            <person name="Kawaji H."/>
            <person name="Kawagashira N."/>
            <person name="Kawashima T."/>
            <person name="Kojima M."/>
            <person name="Kondo S."/>
            <person name="Konno H."/>
            <person name="Nakano K."/>
            <person name="Ninomiya N."/>
            <person name="Nishio T."/>
            <person name="Okada M."/>
            <person name="Plessy C."/>
            <person name="Shibata K."/>
            <person name="Shiraki T."/>
            <person name="Suzuki S."/>
            <person name="Tagami M."/>
            <person name="Waki K."/>
            <person name="Watahiki A."/>
            <person name="Okamura-Oho Y."/>
            <person name="Suzuki H."/>
            <person name="Kawai J."/>
            <person name="Hayashizaki Y."/>
        </authorList>
    </citation>
    <scope>NUCLEOTIDE SEQUENCE [LARGE SCALE MRNA]</scope>
    <source>
        <strain>C57BL/6J</strain>
    </source>
</reference>
<reference key="2">
    <citation type="journal article" date="2004" name="Genome Res.">
        <title>The status, quality, and expansion of the NIH full-length cDNA project: the Mammalian Gene Collection (MGC).</title>
        <authorList>
            <consortium name="The MGC Project Team"/>
        </authorList>
    </citation>
    <scope>NUCLEOTIDE SEQUENCE [LARGE SCALE MRNA]</scope>
    <source>
        <strain>FVB/N</strain>
        <tissue>Mammary tumor</tissue>
    </source>
</reference>
<reference key="3">
    <citation type="journal article" date="2010" name="Cell">
        <title>A tissue-specific atlas of mouse protein phosphorylation and expression.</title>
        <authorList>
            <person name="Huttlin E.L."/>
            <person name="Jedrychowski M.P."/>
            <person name="Elias J.E."/>
            <person name="Goswami T."/>
            <person name="Rad R."/>
            <person name="Beausoleil S.A."/>
            <person name="Villen J."/>
            <person name="Haas W."/>
            <person name="Sowa M.E."/>
            <person name="Gygi S.P."/>
        </authorList>
    </citation>
    <scope>IDENTIFICATION BY MASS SPECTROMETRY [LARGE SCALE ANALYSIS]</scope>
    <source>
        <tissue>Heart</tissue>
    </source>
</reference>